<comment type="function">
    <text evidence="2 3 4 5 6">Negatively regulates telomere length by preventing telomere elongation or promoting degradation of the telomere ends. Recruited to telomeres by interaction with the C-terminus of RAP1, which binds directly to telomeric repeat DNA. This may create a negative feedback loop in which the addition of new telomere repeats creates binding sites for inhibitors of telomere length extension. May also influence the balance of transcriptional silencing at telomeres and the silent mating type locus HMR, which is mediated by SIR (Silent Information Regulator) proteins including SIR3 and SIR4. RIF1 competes with SIR proteins for binding to the C-terminus of RAP1. In the absence of RIF1, a limiting cellular pool of SIR proteins may preferentially associate with RAP1 at sub-telomeric loci, causing enhanced telomeric silencing and attenuated silencing of the HMR locus.</text>
</comment>
<comment type="subunit">
    <text evidence="4 5 6">Interacts with RAP1 (via C-terminus) (PubMed:1577274, PubMed:7867933, PubMed:9087429). Interacts with RIF2 (PubMed:7867933, PubMed:9087429).</text>
</comment>
<comment type="interaction">
    <interactant intactId="EBI-2083307">
        <id>P29539</id>
    </interactant>
    <interactant intactId="EBI-14821">
        <id>P11938</id>
        <label>RAP1</label>
    </interactant>
    <organismsDiffer>false</organismsDiffer>
    <experiments>3</experiments>
</comment>
<comment type="subcellular location">
    <subcellularLocation>
        <location>Nucleus</location>
    </subcellularLocation>
    <subcellularLocation>
        <location>Chromosome</location>
        <location>Telomere</location>
    </subcellularLocation>
    <text>Localizes to telomeres. Telomere association begins in G1/S, attains a peak during late G2/S phase of the cell cycle, and is lost during telophase. Localization to telomeres may be increased by telomere uncapping caused by expression of a mutant telomerase RNA subunit (TLC1).</text>
</comment>
<comment type="similarity">
    <text evidence="7">Belongs to the RIF1 family.</text>
</comment>
<accession>P29539</accession>
<accession>D6VQS1</accession>
<accession>P89507</accession>
<protein>
    <recommendedName>
        <fullName>Telomere length regulator protein RIF1</fullName>
    </recommendedName>
    <alternativeName>
        <fullName>RAP1-interacting factor 1</fullName>
    </alternativeName>
</protein>
<feature type="chain" id="PRO_0000097336" description="Telomere length regulator protein RIF1">
    <location>
        <begin position="1"/>
        <end position="1916"/>
    </location>
</feature>
<feature type="region of interest" description="Disordered" evidence="1">
    <location>
        <begin position="1"/>
        <end position="71"/>
    </location>
</feature>
<feature type="region of interest" description="Disordered" evidence="1">
    <location>
        <begin position="126"/>
        <end position="149"/>
    </location>
</feature>
<feature type="region of interest" description="Disordered" evidence="1">
    <location>
        <begin position="1314"/>
        <end position="1372"/>
    </location>
</feature>
<feature type="region of interest" description="Disordered" evidence="1">
    <location>
        <begin position="1441"/>
        <end position="1476"/>
    </location>
</feature>
<feature type="region of interest" description="Disordered" evidence="1">
    <location>
        <begin position="1606"/>
        <end position="1678"/>
    </location>
</feature>
<feature type="region of interest" description="Disordered" evidence="1">
    <location>
        <begin position="1789"/>
        <end position="1811"/>
    </location>
</feature>
<feature type="region of interest" description="Disordered" evidence="1">
    <location>
        <begin position="1829"/>
        <end position="1854"/>
    </location>
</feature>
<feature type="compositionally biased region" description="Basic and acidic residues" evidence="1">
    <location>
        <begin position="1"/>
        <end position="26"/>
    </location>
</feature>
<feature type="compositionally biased region" description="Polar residues" evidence="1">
    <location>
        <begin position="27"/>
        <end position="37"/>
    </location>
</feature>
<feature type="compositionally biased region" description="Low complexity" evidence="1">
    <location>
        <begin position="1324"/>
        <end position="1334"/>
    </location>
</feature>
<feature type="compositionally biased region" description="Polar residues" evidence="1">
    <location>
        <begin position="1342"/>
        <end position="1355"/>
    </location>
</feature>
<feature type="compositionally biased region" description="Polar residues" evidence="1">
    <location>
        <begin position="1615"/>
        <end position="1625"/>
    </location>
</feature>
<feature type="compositionally biased region" description="Basic and acidic residues" evidence="1">
    <location>
        <begin position="1626"/>
        <end position="1635"/>
    </location>
</feature>
<feature type="compositionally biased region" description="Polar residues" evidence="1">
    <location>
        <begin position="1800"/>
        <end position="1811"/>
    </location>
</feature>
<feature type="modified residue" description="Phosphoserine" evidence="10">
    <location>
        <position position="97"/>
    </location>
</feature>
<feature type="modified residue" description="Phosphoserine" evidence="8 9 10 11">
    <location>
        <position position="1637"/>
    </location>
</feature>
<feature type="modified residue" description="Phosphoserine" evidence="10">
    <location>
        <position position="1795"/>
    </location>
</feature>
<feature type="modified residue" description="Phosphoserine" evidence="11">
    <location>
        <position position="1852"/>
    </location>
</feature>
<feature type="sequence conflict" description="In Ref. 1; CAA47121." evidence="7" ref="1">
    <original>C</original>
    <variation>S</variation>
    <location>
        <position position="580"/>
    </location>
</feature>
<feature type="sequence conflict" description="In Ref. 2; CAA85238 and 4; CAA53638." evidence="7" ref="2 4">
    <original>A</original>
    <variation>T</variation>
    <location>
        <position position="732"/>
    </location>
</feature>
<feature type="helix" evidence="12">
    <location>
        <begin position="1859"/>
        <end position="1861"/>
    </location>
</feature>
<feature type="helix" evidence="12">
    <location>
        <begin position="1866"/>
        <end position="1876"/>
    </location>
</feature>
<feature type="helix" evidence="12">
    <location>
        <begin position="1880"/>
        <end position="1885"/>
    </location>
</feature>
<feature type="helix" evidence="12">
    <location>
        <begin position="1888"/>
        <end position="1907"/>
    </location>
</feature>
<name>RIF1_YEAST</name>
<keyword id="KW-0002">3D-structure</keyword>
<keyword id="KW-0131">Cell cycle</keyword>
<keyword id="KW-0158">Chromosome</keyword>
<keyword id="KW-0539">Nucleus</keyword>
<keyword id="KW-0597">Phosphoprotein</keyword>
<keyword id="KW-1185">Reference proteome</keyword>
<keyword id="KW-0779">Telomere</keyword>
<organism>
    <name type="scientific">Saccharomyces cerevisiae (strain ATCC 204508 / S288c)</name>
    <name type="common">Baker's yeast</name>
    <dbReference type="NCBI Taxonomy" id="559292"/>
    <lineage>
        <taxon>Eukaryota</taxon>
        <taxon>Fungi</taxon>
        <taxon>Dikarya</taxon>
        <taxon>Ascomycota</taxon>
        <taxon>Saccharomycotina</taxon>
        <taxon>Saccharomycetes</taxon>
        <taxon>Saccharomycetales</taxon>
        <taxon>Saccharomycetaceae</taxon>
        <taxon>Saccharomyces</taxon>
    </lineage>
</organism>
<sequence>MSKDFSDKKKHTIDRIDQHILRRSQHDNYSNGSSPWMKTNLPPPSPQAHMHIQSDLSPTPKRRKLASSSDCENKQFDLSAINKNLYPEDTGSRLMQSLPELSASNSDNVSPVTKSVAFSDRIESSPIYRIPGSSPKPSPSSKPGKSILRNRLPSVRTVSDLSYNKLQYTQHKLHNGNIFTSPYKETRVNPRALEYWVSGEIHGLVDNESVSEFKEIIEGGLGILRQESEDYVARRFEVYATFNNIIPILTTKNVNEVDQKFNILIVNIESIIEICIPHLQIAQDTLLSSSEKKNPFVIRLYVQIVRFFSAIMSNFKIVKWLTKRPDLVNKLKVIYRWTTGALRNENSNKIIITAQVSFLRDEKFGTFFLSNEEIKPIISTFTEIMEINSHNLIYEKLLLIRGFLSKYPKLMIETVTSWLPGEVLPRIIIGDEIYSMKILITSIVVLLELLKKCLDFVDEHERIYQCIMLSPVCETIPEKFLSKLPLNSYDSANLDKVTIGHLLTQQIKNYIVVKNDNKIAMDLWLSMTGLLYDSGKRVYDLTSESNKVWFDLNNLCFINNHPKTRLMSIKVWRIITYCICTKISQKNQEGNKSLLSLLRTPFQMTLPYVNDPSAREGIIYHLLGVVYTAFTSNKNLSTDMFELFWDHLITPIYEDYVFKYDSIHLQNVLFTVLHLLIGGKNADVALERKYKKHIHPMSVIASEGVKLKDISSLPPQIIKREYDKIMKVVFQAVEVAISNVNLAHDLILTSLKHLPEDRKDQTHLESFSSLILKVTQNNKDTPIFRDFFGAVTSSFVYTFLDLFLRKNDSSLVNFNIQISKVGISQGNMTLDLLKDVIRKARNETSEFLIIEKFLELDDKKTEVYAQNWVGSTLLPPNISFREFQSLANIVNKVPNENSIENFLDLCLKLSFPVNLFTLLHVSMWSNNNFIYFIQSYVSKNENKLNVDLITLLKTSLPGNPELFSGLLPFLRRNKFMDILEYCIHSNPNLLNSIPDLNSDLLLKLLPRSRASYFAANIKLFKCSEQLTLVRWLLKGQQLEQLNQNFSEIENVLQNASDSELEKSEIIRELLHLAMANPIEPLFSGLLNFCIKNNMADHLDEFCGNMTSEVLFKISPELLLKLLTYKEKPNGKLLAAVIEKIENGDDDYILELLEKIIIQKEIQILEKLKEPLLVFFLNPVSSNMQKHKKSTNMLRELVLLYLTKPLSRSAAKKFFSMLISILPPNPNYQTIDMVNLLIDLIKSHNRKFKDKRTYNATLKTIGKWIQESGVVHQGDSSKEIEAIPDTKSMYIPCEGSENKLSNLQRKVDSQDIQVPATQGMKEPPSSIQISSQISAKDSDSISLKNTAIMNSSQQESHANRSRSIDDETLEEVDNESIREIDQQMKSTQLDKNVANHSNICSTKSDEVDVTELHESIDTQSSEVNAYQPIEVLTSELKAVTNRSIKTNPDHNVVNSDNPLKRPSKETPTSENKRSKGHETMVDVLVSEEQAVSPSSDVICTNIKSIANEESSLALRNSIKVETNCNENSLNVTLDLDQQTITKEDGKGQVEHVQRQENQESMNKINSKSFTQDNIAQYKSVKKARPNNEGENNDYACNVEQASPVRNEVPGDGIQIPSGTILLNSSKQTEKSKVDDLRSDEDEHGTVAQEKHQVGAINSRNKNNDRMDSTPIQGTEEESREVVMTEEGINVRLEDSGTCELNKNLKGPLKGDKDANINDDFVPVEENVRDEGFLKSMEHAVSKETGLEEQPEVADISVLPEIRIPIFNSLKMQGSKSQIKEKLKKRLQRNELMPPDSPPRMTENTNINAQNGLDTVPKTIGGKEKHHEIQLGQAHTEADGEPLLGGDGNEDATSREATPSLKVHFFSKKSRRLVARLRGFTPGDLNGISVEERRNLRIELLDFMMRLEYYSNRDNDMN</sequence>
<dbReference type="EMBL" id="X66501">
    <property type="protein sequence ID" value="CAA47121.1"/>
    <property type="molecule type" value="Genomic_DNA"/>
</dbReference>
<dbReference type="EMBL" id="Z36144">
    <property type="protein sequence ID" value="CAA85238.1"/>
    <property type="molecule type" value="Genomic_DNA"/>
</dbReference>
<dbReference type="EMBL" id="Z36145">
    <property type="protein sequence ID" value="CAA85240.1"/>
    <property type="molecule type" value="Genomic_DNA"/>
</dbReference>
<dbReference type="EMBL" id="X76053">
    <property type="protein sequence ID" value="CAA53638.1"/>
    <property type="molecule type" value="Genomic_DNA"/>
</dbReference>
<dbReference type="EMBL" id="BK006936">
    <property type="protein sequence ID" value="DAA07391.2"/>
    <property type="molecule type" value="Genomic_DNA"/>
</dbReference>
<dbReference type="PIR" id="S46157">
    <property type="entry name" value="S46157"/>
</dbReference>
<dbReference type="RefSeq" id="NP_009834.4">
    <property type="nucleotide sequence ID" value="NM_001178623.4"/>
</dbReference>
<dbReference type="PDB" id="4BJS">
    <property type="method" value="X-ray"/>
    <property type="resolution" value="1.94 A"/>
    <property type="chains" value="A/B/C/D=1857-1916"/>
</dbReference>
<dbReference type="PDB" id="4BJT">
    <property type="method" value="X-ray"/>
    <property type="resolution" value="1.61 A"/>
    <property type="chains" value="D/E/F=1752-1771"/>
</dbReference>
<dbReference type="PDB" id="5NVR">
    <property type="method" value="X-ray"/>
    <property type="resolution" value="3.95 A"/>
    <property type="chains" value="A=177-1282"/>
</dbReference>
<dbReference type="PDB" id="5NW5">
    <property type="method" value="X-ray"/>
    <property type="resolution" value="6.50 A"/>
    <property type="chains" value="A/B=100-1321"/>
</dbReference>
<dbReference type="PDBsum" id="4BJS"/>
<dbReference type="PDBsum" id="4BJT"/>
<dbReference type="PDBsum" id="5NVR"/>
<dbReference type="PDBsum" id="5NW5"/>
<dbReference type="SMR" id="P29539"/>
<dbReference type="BioGRID" id="32970">
    <property type="interactions" value="149"/>
</dbReference>
<dbReference type="ComplexPortal" id="CPX-2112">
    <property type="entry name" value="Telosome complex"/>
</dbReference>
<dbReference type="DIP" id="DIP-801N"/>
<dbReference type="FunCoup" id="P29539">
    <property type="interactions" value="146"/>
</dbReference>
<dbReference type="IntAct" id="P29539">
    <property type="interactions" value="16"/>
</dbReference>
<dbReference type="MINT" id="P29539"/>
<dbReference type="STRING" id="4932.YBR275C"/>
<dbReference type="GlyGen" id="P29539">
    <property type="glycosylation" value="1 site"/>
</dbReference>
<dbReference type="iPTMnet" id="P29539"/>
<dbReference type="SwissPalm" id="P29539"/>
<dbReference type="PaxDb" id="4932-YBR275C"/>
<dbReference type="PeptideAtlas" id="P29539"/>
<dbReference type="EnsemblFungi" id="YBR275C_mRNA">
    <property type="protein sequence ID" value="YBR275C"/>
    <property type="gene ID" value="YBR275C"/>
</dbReference>
<dbReference type="GeneID" id="852578"/>
<dbReference type="KEGG" id="sce:YBR275C"/>
<dbReference type="AGR" id="SGD:S000000479"/>
<dbReference type="SGD" id="S000000479">
    <property type="gene designation" value="RIF1"/>
</dbReference>
<dbReference type="VEuPathDB" id="FungiDB:YBR275C"/>
<dbReference type="eggNOG" id="ENOG502QPT7">
    <property type="taxonomic scope" value="Eukaryota"/>
</dbReference>
<dbReference type="HOGENOM" id="CLU_002800_0_0_1"/>
<dbReference type="InParanoid" id="P29539"/>
<dbReference type="OMA" id="HERIYQC"/>
<dbReference type="OrthoDB" id="4070686at2759"/>
<dbReference type="BioCyc" id="YEAST:G3O-29196-MONOMER"/>
<dbReference type="BioGRID-ORCS" id="852578">
    <property type="hits" value="0 hits in 10 CRISPR screens"/>
</dbReference>
<dbReference type="EvolutionaryTrace" id="P29539"/>
<dbReference type="PRO" id="PR:P29539"/>
<dbReference type="Proteomes" id="UP000002311">
    <property type="component" value="Chromosome II"/>
</dbReference>
<dbReference type="RNAct" id="P29539">
    <property type="molecule type" value="protein"/>
</dbReference>
<dbReference type="GO" id="GO:0000781">
    <property type="term" value="C:chromosome, telomeric region"/>
    <property type="evidence" value="ECO:0000314"/>
    <property type="project" value="SGD"/>
</dbReference>
<dbReference type="GO" id="GO:0140445">
    <property type="term" value="C:chromosome, telomeric repeat region"/>
    <property type="evidence" value="ECO:0000318"/>
    <property type="project" value="GO_Central"/>
</dbReference>
<dbReference type="GO" id="GO:0005634">
    <property type="term" value="C:nucleus"/>
    <property type="evidence" value="ECO:0000318"/>
    <property type="project" value="GO_Central"/>
</dbReference>
<dbReference type="GO" id="GO:0070187">
    <property type="term" value="C:shelterin complex"/>
    <property type="evidence" value="ECO:0000353"/>
    <property type="project" value="ComplexPortal"/>
</dbReference>
<dbReference type="GO" id="GO:0019237">
    <property type="term" value="F:centromeric DNA binding"/>
    <property type="evidence" value="ECO:0000314"/>
    <property type="project" value="SGD"/>
</dbReference>
<dbReference type="GO" id="GO:0003688">
    <property type="term" value="F:DNA replication origin binding"/>
    <property type="evidence" value="ECO:0000314"/>
    <property type="project" value="SGD"/>
</dbReference>
<dbReference type="GO" id="GO:0000979">
    <property type="term" value="F:RNA polymerase II core promoter sequence-specific DNA binding"/>
    <property type="evidence" value="ECO:0000314"/>
    <property type="project" value="SGD"/>
</dbReference>
<dbReference type="GO" id="GO:0042162">
    <property type="term" value="F:telomeric DNA binding"/>
    <property type="evidence" value="ECO:0000314"/>
    <property type="project" value="SGD"/>
</dbReference>
<dbReference type="GO" id="GO:0000729">
    <property type="term" value="P:DNA double-strand break processing"/>
    <property type="evidence" value="ECO:0000315"/>
    <property type="project" value="SGD"/>
</dbReference>
<dbReference type="GO" id="GO:0006270">
    <property type="term" value="P:DNA replication initiation"/>
    <property type="evidence" value="ECO:0000316"/>
    <property type="project" value="SGD"/>
</dbReference>
<dbReference type="GO" id="GO:0032297">
    <property type="term" value="P:negative regulation of DNA-templated DNA replication initiation"/>
    <property type="evidence" value="ECO:0000315"/>
    <property type="project" value="SGD"/>
</dbReference>
<dbReference type="GO" id="GO:0101018">
    <property type="term" value="P:negative regulation of mitotic DNA replication initiation from late origin"/>
    <property type="evidence" value="ECO:0000315"/>
    <property type="project" value="SGD"/>
</dbReference>
<dbReference type="GO" id="GO:0070198">
    <property type="term" value="P:protein localization to chromosome, telomeric region"/>
    <property type="evidence" value="ECO:0000315"/>
    <property type="project" value="SGD"/>
</dbReference>
<dbReference type="GO" id="GO:0097752">
    <property type="term" value="P:regulation of DNA stability"/>
    <property type="evidence" value="ECO:0000315"/>
    <property type="project" value="SGD"/>
</dbReference>
<dbReference type="GO" id="GO:0030466">
    <property type="term" value="P:silent mating-type cassette heterochromatin formation"/>
    <property type="evidence" value="ECO:0000315"/>
    <property type="project" value="SGD"/>
</dbReference>
<dbReference type="GO" id="GO:0016233">
    <property type="term" value="P:telomere capping"/>
    <property type="evidence" value="ECO:0000315"/>
    <property type="project" value="SGD"/>
</dbReference>
<dbReference type="GO" id="GO:0000723">
    <property type="term" value="P:telomere maintenance"/>
    <property type="evidence" value="ECO:0000315"/>
    <property type="project" value="SGD"/>
</dbReference>
<dbReference type="CDD" id="cd14267">
    <property type="entry name" value="Rif1_CTD_C-II_like"/>
    <property type="match status" value="1"/>
</dbReference>
<dbReference type="DisProt" id="DP01607"/>
<dbReference type="Gene3D" id="6.10.140.1760">
    <property type="match status" value="1"/>
</dbReference>
<dbReference type="IDEAL" id="IID50206"/>
<dbReference type="InterPro" id="IPR022031">
    <property type="entry name" value="Rif1_N"/>
</dbReference>
<dbReference type="PANTHER" id="PTHR22928">
    <property type="entry name" value="TELOMERE-ASSOCIATED PROTEIN RIF1"/>
    <property type="match status" value="1"/>
</dbReference>
<dbReference type="PANTHER" id="PTHR22928:SF3">
    <property type="entry name" value="TELOMERE-ASSOCIATED PROTEIN RIF1"/>
    <property type="match status" value="1"/>
</dbReference>
<dbReference type="Pfam" id="PF12231">
    <property type="entry name" value="Rif1_N"/>
    <property type="match status" value="1"/>
</dbReference>
<evidence type="ECO:0000256" key="1">
    <source>
        <dbReference type="SAM" id="MobiDB-lite"/>
    </source>
</evidence>
<evidence type="ECO:0000269" key="2">
    <source>
    </source>
</evidence>
<evidence type="ECO:0000269" key="3">
    <source>
    </source>
</evidence>
<evidence type="ECO:0000269" key="4">
    <source>
    </source>
</evidence>
<evidence type="ECO:0000269" key="5">
    <source>
    </source>
</evidence>
<evidence type="ECO:0000269" key="6">
    <source>
    </source>
</evidence>
<evidence type="ECO:0000305" key="7"/>
<evidence type="ECO:0007744" key="8">
    <source>
    </source>
</evidence>
<evidence type="ECO:0007744" key="9">
    <source>
    </source>
</evidence>
<evidence type="ECO:0007744" key="10">
    <source>
    </source>
</evidence>
<evidence type="ECO:0007744" key="11">
    <source>
    </source>
</evidence>
<evidence type="ECO:0007829" key="12">
    <source>
        <dbReference type="PDB" id="4BJS"/>
    </source>
</evidence>
<reference key="1">
    <citation type="journal article" date="1992" name="Genes Dev.">
        <title>A RAP1-interacting protein involved in transcriptional silencing and telomere length regulation.</title>
        <authorList>
            <person name="Hardy C.F.J."/>
            <person name="Sussel L."/>
            <person name="Shore D."/>
        </authorList>
    </citation>
    <scope>NUCLEOTIDE SEQUENCE [GENOMIC DNA]</scope>
    <scope>FUNCTION</scope>
    <scope>INTERACTION WITH RAP1</scope>
    <source>
        <strain>ATCC 204510 / AB320</strain>
    </source>
</reference>
<reference key="2">
    <citation type="journal article" date="1994" name="EMBO J.">
        <title>Complete DNA sequence of yeast chromosome II.</title>
        <authorList>
            <person name="Feldmann H."/>
            <person name="Aigle M."/>
            <person name="Aljinovic G."/>
            <person name="Andre B."/>
            <person name="Baclet M.C."/>
            <person name="Barthe C."/>
            <person name="Baur A."/>
            <person name="Becam A.-M."/>
            <person name="Biteau N."/>
            <person name="Boles E."/>
            <person name="Brandt T."/>
            <person name="Brendel M."/>
            <person name="Brueckner M."/>
            <person name="Bussereau F."/>
            <person name="Christiansen C."/>
            <person name="Contreras R."/>
            <person name="Crouzet M."/>
            <person name="Cziepluch C."/>
            <person name="Demolis N."/>
            <person name="Delaveau T."/>
            <person name="Doignon F."/>
            <person name="Domdey H."/>
            <person name="Duesterhus S."/>
            <person name="Dubois E."/>
            <person name="Dujon B."/>
            <person name="El Bakkoury M."/>
            <person name="Entian K.-D."/>
            <person name="Feuermann M."/>
            <person name="Fiers W."/>
            <person name="Fobo G.M."/>
            <person name="Fritz C."/>
            <person name="Gassenhuber J."/>
            <person name="Glansdorff N."/>
            <person name="Goffeau A."/>
            <person name="Grivell L.A."/>
            <person name="de Haan M."/>
            <person name="Hein C."/>
            <person name="Herbert C.J."/>
            <person name="Hollenberg C.P."/>
            <person name="Holmstroem K."/>
            <person name="Jacq C."/>
            <person name="Jacquet M."/>
            <person name="Jauniaux J.-C."/>
            <person name="Jonniaux J.-L."/>
            <person name="Kallesoee T."/>
            <person name="Kiesau P."/>
            <person name="Kirchrath L."/>
            <person name="Koetter P."/>
            <person name="Korol S."/>
            <person name="Liebl S."/>
            <person name="Logghe M."/>
            <person name="Lohan A.J.E."/>
            <person name="Louis E.J."/>
            <person name="Li Z.Y."/>
            <person name="Maat M.J."/>
            <person name="Mallet L."/>
            <person name="Mannhaupt G."/>
            <person name="Messenguy F."/>
            <person name="Miosga T."/>
            <person name="Molemans F."/>
            <person name="Mueller S."/>
            <person name="Nasr F."/>
            <person name="Obermaier B."/>
            <person name="Perea J."/>
            <person name="Pierard A."/>
            <person name="Piravandi E."/>
            <person name="Pohl F.M."/>
            <person name="Pohl T.M."/>
            <person name="Potier S."/>
            <person name="Proft M."/>
            <person name="Purnelle B."/>
            <person name="Ramezani Rad M."/>
            <person name="Rieger M."/>
            <person name="Rose M."/>
            <person name="Schaaff-Gerstenschlaeger I."/>
            <person name="Scherens B."/>
            <person name="Schwarzlose C."/>
            <person name="Skala J."/>
            <person name="Slonimski P.P."/>
            <person name="Smits P.H.M."/>
            <person name="Souciet J.-L."/>
            <person name="Steensma H.Y."/>
            <person name="Stucka R."/>
            <person name="Urrestarazu L.A."/>
            <person name="van der Aart Q.J.M."/>
            <person name="Van Dyck L."/>
            <person name="Vassarotti A."/>
            <person name="Vetter I."/>
            <person name="Vierendeels F."/>
            <person name="Vissers S."/>
            <person name="Wagner G."/>
            <person name="de Wergifosse P."/>
            <person name="Wolfe K.H."/>
            <person name="Zagulski M."/>
            <person name="Zimmermann F.K."/>
            <person name="Mewes H.-W."/>
            <person name="Kleine K."/>
        </authorList>
    </citation>
    <scope>NUCLEOTIDE SEQUENCE [LARGE SCALE GENOMIC DNA]</scope>
    <source>
        <strain>ATCC 204508 / S288c</strain>
    </source>
</reference>
<reference key="3">
    <citation type="journal article" date="2014" name="G3 (Bethesda)">
        <title>The reference genome sequence of Saccharomyces cerevisiae: Then and now.</title>
        <authorList>
            <person name="Engel S.R."/>
            <person name="Dietrich F.S."/>
            <person name="Fisk D.G."/>
            <person name="Binkley G."/>
            <person name="Balakrishnan R."/>
            <person name="Costanzo M.C."/>
            <person name="Dwight S.S."/>
            <person name="Hitz B.C."/>
            <person name="Karra K."/>
            <person name="Nash R.S."/>
            <person name="Weng S."/>
            <person name="Wong E.D."/>
            <person name="Lloyd P."/>
            <person name="Skrzypek M.S."/>
            <person name="Miyasato S.R."/>
            <person name="Simison M."/>
            <person name="Cherry J.M."/>
        </authorList>
    </citation>
    <scope>GENOME REANNOTATION</scope>
    <scope>SEQUENCE REVISION TO 732</scope>
    <source>
        <strain>ATCC 204508 / S288c</strain>
    </source>
</reference>
<reference key="4">
    <citation type="journal article" date="1994" name="Yeast">
        <title>The sequence of a 32,420 bp segment located on the right arm of chromosome II from Saccharomyces cerevisiae.</title>
        <authorList>
            <person name="Holmstroem K."/>
            <person name="Brandt T."/>
            <person name="Kallesoe T."/>
        </authorList>
    </citation>
    <scope>NUCLEOTIDE SEQUENCE [GENOMIC DNA] OF 1-1096</scope>
    <source>
        <strain>ATCC 204508 / S288c</strain>
    </source>
</reference>
<reference key="5">
    <citation type="journal article" date="1995" name="Genes Dev.">
        <title>Action of a RAP1 carboxy-terminal silencing domain reveals an underlying competition between HMR and telomeres in yeast.</title>
        <authorList>
            <person name="Buck S.W."/>
            <person name="Shore D."/>
        </authorList>
    </citation>
    <scope>FUNCTION</scope>
    <scope>INTERACTION WITH RAP1</scope>
</reference>
<reference key="6">
    <citation type="journal article" date="1997" name="Genes Dev.">
        <title>A novel Rap1p-interacting factor, Rif2p, cooperates with Rif1p to regulate telomere length in Saccharomyces cerevisiae.</title>
        <authorList>
            <person name="Wotton D."/>
            <person name="Shore D."/>
        </authorList>
    </citation>
    <scope>FUNCTION</scope>
    <scope>INTERACTION WITH RAP1 AND RIF2</scope>
</reference>
<reference key="7">
    <citation type="journal article" date="1998" name="Mol. Cell. Biol.">
        <title>Sir proteins, Rif proteins, and Cdc13p bind Saccharomyces telomeres in vivo.</title>
        <authorList>
            <person name="Bourns B.D."/>
            <person name="Alexander M.K."/>
            <person name="Smith A.M."/>
            <person name="Zakian V.A."/>
        </authorList>
    </citation>
    <scope>SUBCELLULAR LOCATION</scope>
</reference>
<reference key="8">
    <citation type="journal article" date="1999" name="Curr. Biol.">
        <title>Yeast Ku protein plays a direct role in telomeric silencing and counteracts inhibition by rif proteins.</title>
        <authorList>
            <person name="Mishra K."/>
            <person name="Shore D."/>
        </authorList>
    </citation>
    <scope>FUNCTION</scope>
    <scope>SUBCELLULAR LOCATION</scope>
</reference>
<reference key="9">
    <citation type="journal article" date="2003" name="Mol. Biol. Cell">
        <title>Telomeric protein distributions and remodeling through the cell cycle in Saccharomyces cerevisiae.</title>
        <authorList>
            <person name="Smith C.D."/>
            <person name="Smith D.L."/>
            <person name="DeRisi J.L."/>
            <person name="Blackburn E.H."/>
        </authorList>
    </citation>
    <scope>SUBCELLULAR LOCATION</scope>
</reference>
<reference key="10">
    <citation type="journal article" date="2004" name="Mol. Cell. Biol.">
        <title>Counting of Rif1p and Rif2p on Saccharomyces cerevisiae telomeres regulates telomere length.</title>
        <authorList>
            <person name="Levy D.L."/>
            <person name="Blackburn E.H."/>
        </authorList>
    </citation>
    <scope>FUNCTION</scope>
</reference>
<reference key="11">
    <citation type="journal article" date="2007" name="J. Proteome Res.">
        <title>Large-scale phosphorylation analysis of alpha-factor-arrested Saccharomyces cerevisiae.</title>
        <authorList>
            <person name="Li X."/>
            <person name="Gerber S.A."/>
            <person name="Rudner A.D."/>
            <person name="Beausoleil S.A."/>
            <person name="Haas W."/>
            <person name="Villen J."/>
            <person name="Elias J.E."/>
            <person name="Gygi S.P."/>
        </authorList>
    </citation>
    <scope>PHOSPHORYLATION [LARGE SCALE ANALYSIS] AT SER-1637</scope>
    <scope>IDENTIFICATION BY MASS SPECTROMETRY [LARGE SCALE ANALYSIS]</scope>
    <source>
        <strain>ADR376</strain>
    </source>
</reference>
<reference key="12">
    <citation type="journal article" date="2007" name="Proc. Natl. Acad. Sci. U.S.A.">
        <title>Analysis of phosphorylation sites on proteins from Saccharomyces cerevisiae by electron transfer dissociation (ETD) mass spectrometry.</title>
        <authorList>
            <person name="Chi A."/>
            <person name="Huttenhower C."/>
            <person name="Geer L.Y."/>
            <person name="Coon J.J."/>
            <person name="Syka J.E.P."/>
            <person name="Bai D.L."/>
            <person name="Shabanowitz J."/>
            <person name="Burke D.J."/>
            <person name="Troyanskaya O.G."/>
            <person name="Hunt D.F."/>
        </authorList>
    </citation>
    <scope>PHOSPHORYLATION [LARGE SCALE ANALYSIS] AT SER-1637</scope>
    <scope>IDENTIFICATION BY MASS SPECTROMETRY [LARGE SCALE ANALYSIS]</scope>
</reference>
<reference key="13">
    <citation type="journal article" date="2008" name="Mol. Cell. Proteomics">
        <title>A multidimensional chromatography technology for in-depth phosphoproteome analysis.</title>
        <authorList>
            <person name="Albuquerque C.P."/>
            <person name="Smolka M.B."/>
            <person name="Payne S.H."/>
            <person name="Bafna V."/>
            <person name="Eng J."/>
            <person name="Zhou H."/>
        </authorList>
    </citation>
    <scope>PHOSPHORYLATION [LARGE SCALE ANALYSIS] AT SER-97; SER-1637 AND SER-1795</scope>
    <scope>IDENTIFICATION BY MASS SPECTROMETRY [LARGE SCALE ANALYSIS]</scope>
</reference>
<reference key="14">
    <citation type="journal article" date="2009" name="Science">
        <title>Global analysis of Cdk1 substrate phosphorylation sites provides insights into evolution.</title>
        <authorList>
            <person name="Holt L.J."/>
            <person name="Tuch B.B."/>
            <person name="Villen J."/>
            <person name="Johnson A.D."/>
            <person name="Gygi S.P."/>
            <person name="Morgan D.O."/>
        </authorList>
    </citation>
    <scope>PHOSPHORYLATION [LARGE SCALE ANALYSIS] AT SER-1637 AND SER-1852</scope>
    <scope>IDENTIFICATION BY MASS SPECTROMETRY [LARGE SCALE ANALYSIS]</scope>
</reference>
<proteinExistence type="evidence at protein level"/>
<gene>
    <name type="primary">RIF1</name>
    <name type="ordered locus">YBR275C</name>
    <name type="ORF">YBR1743</name>
</gene>